<evidence type="ECO:0000255" key="1">
    <source>
        <dbReference type="HAMAP-Rule" id="MF_01550"/>
    </source>
</evidence>
<feature type="chain" id="PRO_1000192542" description="Guanosine-5'-triphosphate,3'-diphosphate pyrophosphatase">
    <location>
        <begin position="1"/>
        <end position="498"/>
    </location>
</feature>
<keyword id="KW-0378">Hydrolase</keyword>
<dbReference type="EC" id="3.6.1.40" evidence="1"/>
<dbReference type="EMBL" id="CP000901">
    <property type="protein sequence ID" value="ABX85529.1"/>
    <property type="molecule type" value="Genomic_DNA"/>
</dbReference>
<dbReference type="SMR" id="A9R8H6"/>
<dbReference type="KEGG" id="ypg:YpAngola_A0508"/>
<dbReference type="UniPathway" id="UPA00908">
    <property type="reaction ID" value="UER00885"/>
</dbReference>
<dbReference type="GO" id="GO:0004309">
    <property type="term" value="F:exopolyphosphatase activity"/>
    <property type="evidence" value="ECO:0007669"/>
    <property type="project" value="InterPro"/>
</dbReference>
<dbReference type="GO" id="GO:0008894">
    <property type="term" value="F:guanosine-5'-triphosphate,3'-diphosphate diphosphatase activity"/>
    <property type="evidence" value="ECO:0007669"/>
    <property type="project" value="UniProtKB-UniRule"/>
</dbReference>
<dbReference type="GO" id="GO:0015974">
    <property type="term" value="P:guanosine pentaphosphate catabolic process"/>
    <property type="evidence" value="ECO:0007669"/>
    <property type="project" value="InterPro"/>
</dbReference>
<dbReference type="GO" id="GO:0015970">
    <property type="term" value="P:guanosine tetraphosphate biosynthetic process"/>
    <property type="evidence" value="ECO:0007669"/>
    <property type="project" value="UniProtKB-UniRule"/>
</dbReference>
<dbReference type="GO" id="GO:0015949">
    <property type="term" value="P:nucleobase-containing small molecule interconversion"/>
    <property type="evidence" value="ECO:0007669"/>
    <property type="project" value="TreeGrafter"/>
</dbReference>
<dbReference type="CDD" id="cd24117">
    <property type="entry name" value="ASKHA_NBD_EcGppA-like"/>
    <property type="match status" value="1"/>
</dbReference>
<dbReference type="FunFam" id="1.10.3210.10:FF:000004">
    <property type="entry name" value="Guanosine-5'-triphosphate,3'-diphosphate pyrophosphatase"/>
    <property type="match status" value="1"/>
</dbReference>
<dbReference type="FunFam" id="3.30.420.150:FF:000001">
    <property type="entry name" value="Guanosine-5'-triphosphate,3'-diphosphate pyrophosphatase"/>
    <property type="match status" value="1"/>
</dbReference>
<dbReference type="FunFam" id="3.30.420.40:FF:000023">
    <property type="entry name" value="Guanosine-5'-triphosphate,3'-diphosphate pyrophosphatase"/>
    <property type="match status" value="1"/>
</dbReference>
<dbReference type="Gene3D" id="3.30.420.40">
    <property type="match status" value="1"/>
</dbReference>
<dbReference type="Gene3D" id="3.30.420.150">
    <property type="entry name" value="Exopolyphosphatase. Domain 2"/>
    <property type="match status" value="1"/>
</dbReference>
<dbReference type="Gene3D" id="1.10.3210.10">
    <property type="entry name" value="Hypothetical protein af1432"/>
    <property type="match status" value="1"/>
</dbReference>
<dbReference type="HAMAP" id="MF_01550">
    <property type="entry name" value="GppA"/>
    <property type="match status" value="1"/>
</dbReference>
<dbReference type="InterPro" id="IPR043129">
    <property type="entry name" value="ATPase_NBD"/>
</dbReference>
<dbReference type="InterPro" id="IPR022371">
    <property type="entry name" value="Exopolyphosphatase"/>
</dbReference>
<dbReference type="InterPro" id="IPR050273">
    <property type="entry name" value="GppA/Ppx_hydrolase"/>
</dbReference>
<dbReference type="InterPro" id="IPR023709">
    <property type="entry name" value="Guo-5TP_3DP_PyrP"/>
</dbReference>
<dbReference type="InterPro" id="IPR048950">
    <property type="entry name" value="Ppx_GppA_C"/>
</dbReference>
<dbReference type="InterPro" id="IPR003695">
    <property type="entry name" value="Ppx_GppA_N"/>
</dbReference>
<dbReference type="InterPro" id="IPR030673">
    <property type="entry name" value="PyroPPase_GppA_Ppx"/>
</dbReference>
<dbReference type="NCBIfam" id="TIGR03706">
    <property type="entry name" value="exo_poly_only"/>
    <property type="match status" value="1"/>
</dbReference>
<dbReference type="NCBIfam" id="NF008260">
    <property type="entry name" value="PRK11031.1"/>
    <property type="match status" value="1"/>
</dbReference>
<dbReference type="PANTHER" id="PTHR30005">
    <property type="entry name" value="EXOPOLYPHOSPHATASE"/>
    <property type="match status" value="1"/>
</dbReference>
<dbReference type="PANTHER" id="PTHR30005:SF0">
    <property type="entry name" value="RETROGRADE REGULATION PROTEIN 2"/>
    <property type="match status" value="1"/>
</dbReference>
<dbReference type="Pfam" id="PF02541">
    <property type="entry name" value="Ppx-GppA"/>
    <property type="match status" value="1"/>
</dbReference>
<dbReference type="Pfam" id="PF21447">
    <property type="entry name" value="Ppx-GppA_III"/>
    <property type="match status" value="1"/>
</dbReference>
<dbReference type="PIRSF" id="PIRSF001267">
    <property type="entry name" value="Pyrophosphatase_GppA_Ppx"/>
    <property type="match status" value="1"/>
</dbReference>
<dbReference type="SUPFAM" id="SSF53067">
    <property type="entry name" value="Actin-like ATPase domain"/>
    <property type="match status" value="2"/>
</dbReference>
<dbReference type="SUPFAM" id="SSF109604">
    <property type="entry name" value="HD-domain/PDEase-like"/>
    <property type="match status" value="1"/>
</dbReference>
<protein>
    <recommendedName>
        <fullName evidence="1">Guanosine-5'-triphosphate,3'-diphosphate pyrophosphatase</fullName>
        <ecNumber evidence="1">3.6.1.40</ecNumber>
    </recommendedName>
    <alternativeName>
        <fullName evidence="1">Guanosine pentaphosphate phosphohydrolase</fullName>
    </alternativeName>
    <alternativeName>
        <fullName evidence="1">pppGpp-5'-phosphohydrolase</fullName>
    </alternativeName>
</protein>
<gene>
    <name evidence="1" type="primary">gppA</name>
    <name type="ordered locus">YpAngola_A0508</name>
</gene>
<reference key="1">
    <citation type="journal article" date="2010" name="J. Bacteriol.">
        <title>Genome sequence of the deep-rooted Yersinia pestis strain Angola reveals new insights into the evolution and pangenome of the plague bacterium.</title>
        <authorList>
            <person name="Eppinger M."/>
            <person name="Worsham P.L."/>
            <person name="Nikolich M.P."/>
            <person name="Riley D.R."/>
            <person name="Sebastian Y."/>
            <person name="Mou S."/>
            <person name="Achtman M."/>
            <person name="Lindler L.E."/>
            <person name="Ravel J."/>
        </authorList>
    </citation>
    <scope>NUCLEOTIDE SEQUENCE [LARGE SCALE GENOMIC DNA]</scope>
    <source>
        <strain>Angola</strain>
    </source>
</reference>
<sequence length="498" mass="55926">MMLSSTSLYAAIDLGSNSFHMLVVREVAGSIQTLARIKRKVRLAAGLDNQNHLSQEAMERGWQCLKLFSERLQDIPLDQIRVVATATLRLASNADEFLRTATEILGCPIQVISGEEEARLIYHGVAHTTGGPEQRLVVDIGGGSTELVTGNGAQANILVSLSMGCVTWLERYFGDRHLAKENFERAELAAHEMIKPVAQRFREHGWQVCVGASGTVQALQEIMVAQGMDELITLAKLQQLKQRAIQCGKLEELEIPGLTLERALVFPSGLSILIAIFQELSIESMTLAGGALREGLVYGMLHLPVEQDIRRRTLRNLQRRYLLDTEQAKRVSCLADNFFLQVEKEWHLDGRCREFLQNACLIHEIGLSVDFKHAPQHAAYLIRNLDLPGFTPAQKLLLSALLQNQSDTIDLSLLNQQNALPADMAQHLCRLLRLAIIFSSRRRDDTLPAVRLRADNNALYVLVPQGWLEQHPYRAEALEQESHWQSYVQWPLLLEELS</sequence>
<name>GPPA_YERPG</name>
<proteinExistence type="inferred from homology"/>
<organism>
    <name type="scientific">Yersinia pestis bv. Antiqua (strain Angola)</name>
    <dbReference type="NCBI Taxonomy" id="349746"/>
    <lineage>
        <taxon>Bacteria</taxon>
        <taxon>Pseudomonadati</taxon>
        <taxon>Pseudomonadota</taxon>
        <taxon>Gammaproteobacteria</taxon>
        <taxon>Enterobacterales</taxon>
        <taxon>Yersiniaceae</taxon>
        <taxon>Yersinia</taxon>
    </lineage>
</organism>
<accession>A9R8H6</accession>
<comment type="function">
    <text evidence="1">Catalyzes the conversion of pppGpp to ppGpp. Guanosine pentaphosphate (pppGpp) is a cytoplasmic signaling molecule which together with ppGpp controls the 'stringent response', an adaptive process that allows bacteria to respond to amino acid starvation, resulting in the coordinated regulation of numerous cellular activities.</text>
</comment>
<comment type="catalytic activity">
    <reaction evidence="1">
        <text>guanosine 3'-diphosphate 5'-triphosphate + H2O = guanosine 3',5'-bis(diphosphate) + phosphate + H(+)</text>
        <dbReference type="Rhea" id="RHEA:13073"/>
        <dbReference type="ChEBI" id="CHEBI:15377"/>
        <dbReference type="ChEBI" id="CHEBI:15378"/>
        <dbReference type="ChEBI" id="CHEBI:43474"/>
        <dbReference type="ChEBI" id="CHEBI:77828"/>
        <dbReference type="ChEBI" id="CHEBI:142410"/>
        <dbReference type="EC" id="3.6.1.40"/>
    </reaction>
</comment>
<comment type="pathway">
    <text evidence="1">Purine metabolism; ppGpp biosynthesis; ppGpp from GTP: step 2/2.</text>
</comment>
<comment type="similarity">
    <text evidence="1">Belongs to the GppA/Ppx family. GppA subfamily.</text>
</comment>